<feature type="chain" id="PRO_0000427288" description="4-hydroxy-2-oxohexanoate aldolase">
    <location>
        <begin position="1"/>
        <end position="346"/>
    </location>
</feature>
<feature type="domain" description="Pyruvate carboxyltransferase" evidence="2">
    <location>
        <begin position="7"/>
        <end position="259"/>
    </location>
</feature>
<feature type="active site" description="Proton acceptor" evidence="2">
    <location>
        <position position="19"/>
    </location>
</feature>
<feature type="binding site" evidence="2">
    <location>
        <begin position="15"/>
        <end position="16"/>
    </location>
    <ligand>
        <name>substrate</name>
    </ligand>
</feature>
<feature type="binding site" evidence="2">
    <location>
        <position position="16"/>
    </location>
    <ligand>
        <name>Mn(2+)</name>
        <dbReference type="ChEBI" id="CHEBI:29035"/>
    </ligand>
</feature>
<feature type="binding site" evidence="2">
    <location>
        <position position="169"/>
    </location>
    <ligand>
        <name>substrate</name>
    </ligand>
</feature>
<feature type="binding site" evidence="2">
    <location>
        <position position="198"/>
    </location>
    <ligand>
        <name>Mn(2+)</name>
        <dbReference type="ChEBI" id="CHEBI:29035"/>
    </ligand>
</feature>
<feature type="binding site" evidence="2">
    <location>
        <position position="198"/>
    </location>
    <ligand>
        <name>substrate</name>
    </ligand>
</feature>
<feature type="binding site" evidence="2">
    <location>
        <position position="200"/>
    </location>
    <ligand>
        <name>Mn(2+)</name>
        <dbReference type="ChEBI" id="CHEBI:29035"/>
    </ligand>
</feature>
<feature type="binding site" evidence="2">
    <location>
        <position position="289"/>
    </location>
    <ligand>
        <name>substrate</name>
    </ligand>
</feature>
<feature type="site" description="Transition state stabilizer" evidence="2">
    <location>
        <position position="15"/>
    </location>
</feature>
<evidence type="ECO:0000250" key="1">
    <source>
        <dbReference type="UniProtKB" id="P9WMK5"/>
    </source>
</evidence>
<evidence type="ECO:0000255" key="2">
    <source>
        <dbReference type="HAMAP-Rule" id="MF_01656"/>
    </source>
</evidence>
<evidence type="ECO:0000305" key="3"/>
<protein>
    <recommendedName>
        <fullName evidence="1">4-hydroxy-2-oxohexanoate aldolase</fullName>
        <ecNumber evidence="1">4.1.3.43</ecNumber>
    </recommendedName>
    <alternativeName>
        <fullName evidence="2">4-hydroxy-2-keto-pentanoic acid aldolase</fullName>
    </alternativeName>
    <alternativeName>
        <fullName evidence="2">4-hydroxy-2-oxopentanoate aldolase</fullName>
    </alternativeName>
    <alternativeName>
        <fullName evidence="2">4-hydroxy-2-oxovalerate aldolase</fullName>
        <shortName evidence="2">HOA</shortName>
        <ecNumber evidence="2">4.1.3.39</ecNumber>
    </alternativeName>
</protein>
<dbReference type="EC" id="4.1.3.43" evidence="1"/>
<dbReference type="EC" id="4.1.3.39" evidence="2"/>
<dbReference type="EMBL" id="AE000516">
    <property type="protein sequence ID" value="AAK47997.1"/>
    <property type="status" value="ALT_INIT"/>
    <property type="molecule type" value="Genomic_DNA"/>
</dbReference>
<dbReference type="PIR" id="G70675">
    <property type="entry name" value="G70675"/>
</dbReference>
<dbReference type="SMR" id="P9WMK4"/>
<dbReference type="KEGG" id="mtc:MT3638"/>
<dbReference type="PATRIC" id="fig|83331.31.peg.3919"/>
<dbReference type="HOGENOM" id="CLU_049173_0_0_11"/>
<dbReference type="Proteomes" id="UP000001020">
    <property type="component" value="Chromosome"/>
</dbReference>
<dbReference type="GO" id="GO:0003852">
    <property type="term" value="F:2-isopropylmalate synthase activity"/>
    <property type="evidence" value="ECO:0007669"/>
    <property type="project" value="TreeGrafter"/>
</dbReference>
<dbReference type="GO" id="GO:0008701">
    <property type="term" value="F:4-hydroxy-2-oxovalerate aldolase activity"/>
    <property type="evidence" value="ECO:0007669"/>
    <property type="project" value="UniProtKB-UniRule"/>
</dbReference>
<dbReference type="GO" id="GO:0030145">
    <property type="term" value="F:manganese ion binding"/>
    <property type="evidence" value="ECO:0007669"/>
    <property type="project" value="UniProtKB-UniRule"/>
</dbReference>
<dbReference type="GO" id="GO:0009056">
    <property type="term" value="P:catabolic process"/>
    <property type="evidence" value="ECO:0007669"/>
    <property type="project" value="UniProtKB-KW"/>
</dbReference>
<dbReference type="GO" id="GO:0009098">
    <property type="term" value="P:L-leucine biosynthetic process"/>
    <property type="evidence" value="ECO:0007669"/>
    <property type="project" value="TreeGrafter"/>
</dbReference>
<dbReference type="CDD" id="cd07943">
    <property type="entry name" value="DRE_TIM_HOA"/>
    <property type="match status" value="1"/>
</dbReference>
<dbReference type="FunFam" id="1.10.8.60:FF:000042">
    <property type="entry name" value="4-hydroxy-2-oxovalerate aldolase"/>
    <property type="match status" value="1"/>
</dbReference>
<dbReference type="FunFam" id="3.20.20.70:FF:000072">
    <property type="entry name" value="4-hydroxy-2-oxovalerate aldolase"/>
    <property type="match status" value="1"/>
</dbReference>
<dbReference type="Gene3D" id="1.10.8.60">
    <property type="match status" value="1"/>
</dbReference>
<dbReference type="Gene3D" id="3.20.20.70">
    <property type="entry name" value="Aldolase class I"/>
    <property type="match status" value="1"/>
</dbReference>
<dbReference type="HAMAP" id="MF_01656">
    <property type="entry name" value="HOA"/>
    <property type="match status" value="1"/>
</dbReference>
<dbReference type="InterPro" id="IPR050073">
    <property type="entry name" value="2-IPM_HCS-like"/>
</dbReference>
<dbReference type="InterPro" id="IPR017629">
    <property type="entry name" value="4OH_2_O-val_aldolase"/>
</dbReference>
<dbReference type="InterPro" id="IPR013785">
    <property type="entry name" value="Aldolase_TIM"/>
</dbReference>
<dbReference type="InterPro" id="IPR012425">
    <property type="entry name" value="DmpG_comm"/>
</dbReference>
<dbReference type="InterPro" id="IPR035685">
    <property type="entry name" value="DRE_TIM_HOA"/>
</dbReference>
<dbReference type="InterPro" id="IPR000891">
    <property type="entry name" value="PYR_CT"/>
</dbReference>
<dbReference type="NCBIfam" id="TIGR03217">
    <property type="entry name" value="4OH_2_O_val_ald"/>
    <property type="match status" value="1"/>
</dbReference>
<dbReference type="NCBIfam" id="NF006049">
    <property type="entry name" value="PRK08195.1"/>
    <property type="match status" value="1"/>
</dbReference>
<dbReference type="PANTHER" id="PTHR10277:SF9">
    <property type="entry name" value="2-ISOPROPYLMALATE SYNTHASE 1, CHLOROPLASTIC-RELATED"/>
    <property type="match status" value="1"/>
</dbReference>
<dbReference type="PANTHER" id="PTHR10277">
    <property type="entry name" value="HOMOCITRATE SYNTHASE-RELATED"/>
    <property type="match status" value="1"/>
</dbReference>
<dbReference type="Pfam" id="PF07836">
    <property type="entry name" value="DmpG_comm"/>
    <property type="match status" value="1"/>
</dbReference>
<dbReference type="Pfam" id="PF00682">
    <property type="entry name" value="HMGL-like"/>
    <property type="match status" value="1"/>
</dbReference>
<dbReference type="SUPFAM" id="SSF51569">
    <property type="entry name" value="Aldolase"/>
    <property type="match status" value="1"/>
</dbReference>
<dbReference type="SUPFAM" id="SSF89000">
    <property type="entry name" value="post-HMGL domain-like"/>
    <property type="match status" value="1"/>
</dbReference>
<dbReference type="PROSITE" id="PS50991">
    <property type="entry name" value="PYR_CT"/>
    <property type="match status" value="1"/>
</dbReference>
<accession>P9WMK4</accession>
<accession>L0TFQ6</accession>
<accession>P71867</accession>
<accession>Q7D5C4</accession>
<reference key="1">
    <citation type="journal article" date="2002" name="J. Bacteriol.">
        <title>Whole-genome comparison of Mycobacterium tuberculosis clinical and laboratory strains.</title>
        <authorList>
            <person name="Fleischmann R.D."/>
            <person name="Alland D."/>
            <person name="Eisen J.A."/>
            <person name="Carpenter L."/>
            <person name="White O."/>
            <person name="Peterson J.D."/>
            <person name="DeBoy R.T."/>
            <person name="Dodson R.J."/>
            <person name="Gwinn M.L."/>
            <person name="Haft D.H."/>
            <person name="Hickey E.K."/>
            <person name="Kolonay J.F."/>
            <person name="Nelson W.C."/>
            <person name="Umayam L.A."/>
            <person name="Ermolaeva M.D."/>
            <person name="Salzberg S.L."/>
            <person name="Delcher A."/>
            <person name="Utterback T.R."/>
            <person name="Weidman J.F."/>
            <person name="Khouri H.M."/>
            <person name="Gill J."/>
            <person name="Mikula A."/>
            <person name="Bishai W."/>
            <person name="Jacobs W.R. Jr."/>
            <person name="Venter J.C."/>
            <person name="Fraser C.M."/>
        </authorList>
    </citation>
    <scope>NUCLEOTIDE SEQUENCE [LARGE SCALE GENOMIC DNA]</scope>
    <source>
        <strain>CDC 1551 / Oshkosh</strain>
    </source>
</reference>
<name>HOA_MYCTO</name>
<comment type="function">
    <text evidence="1">Involved in cholesterol degradation. Catalyzes the retro-aldol cleavage of 4-hydroxy-2-oxohexanoate (HOHA) to pyruvate and propanal. Can also catalyze the cleavage of 4-hydroxy-2-oxopentanoate (HOPA) to pyruvate and acetaldehyde. The aldehydes produced by this reaction are directly channeled to the dehydrogenase HsaG.</text>
</comment>
<comment type="catalytic activity">
    <reaction evidence="1">
        <text>(S)-4-hydroxy-2-oxohexanoate = propanal + pyruvate</text>
        <dbReference type="Rhea" id="RHEA:36003"/>
        <dbReference type="ChEBI" id="CHEBI:15361"/>
        <dbReference type="ChEBI" id="CHEBI:17153"/>
        <dbReference type="ChEBI" id="CHEBI:73142"/>
        <dbReference type="EC" id="4.1.3.43"/>
    </reaction>
    <physiologicalReaction direction="left-to-right" evidence="1">
        <dbReference type="Rhea" id="RHEA:36004"/>
    </physiologicalReaction>
</comment>
<comment type="catalytic activity">
    <reaction evidence="2">
        <text>(S)-4-hydroxy-2-oxopentanoate = acetaldehyde + pyruvate</text>
        <dbReference type="Rhea" id="RHEA:22624"/>
        <dbReference type="ChEBI" id="CHEBI:15343"/>
        <dbReference type="ChEBI" id="CHEBI:15361"/>
        <dbReference type="ChEBI" id="CHEBI:73143"/>
        <dbReference type="EC" id="4.1.3.39"/>
    </reaction>
    <physiologicalReaction direction="left-to-right" evidence="1">
        <dbReference type="Rhea" id="RHEA:22625"/>
    </physiologicalReaction>
</comment>
<comment type="cofactor">
    <cofactor evidence="1">
        <name>Mn(2+)</name>
        <dbReference type="ChEBI" id="CHEBI:29035"/>
    </cofactor>
</comment>
<comment type="subunit">
    <text evidence="1">Homodimer. Forms a heterotetramer composed of two aldolase (HsaF) and two dehydrogenase (HsaG) subunits.</text>
</comment>
<comment type="similarity">
    <text evidence="2">Belongs to the 4-hydroxy-2-oxovalerate aldolase family.</text>
</comment>
<comment type="sequence caution" evidence="3">
    <conflict type="erroneous initiation">
        <sequence resource="EMBL-CDS" id="AAK47997"/>
    </conflict>
</comment>
<sequence>MTDMWDVRITDTSLRDGSHHKRHQFTKDEVGAIVAALDAAGVPVIEVTHGDGLGGSSFNYGFSKTPEQELIKLAAATAKEARIAFLMLPGVGTKDDIKEARDNGGSICRIATHCTEADVSIQHFGLARELGLETVGFLMMAHTIAPEKLAAQARIMADAGCQCVYVVDSAGALVLDGVADRVSALVAELGEDAQVGFHGHENLGLGVANSVAAVRAGAKQIDGSCRRFGAGAGNAPVEALIGVFDKIGVKTGIDFFDIADAAEDVVRPAMPAECLLDRNALIMGYSGVYSSFLKHAVRQAERYGVPASALLHRAGQRKLIGGQEDQLIDIALEIKRELDSGAAVTH</sequence>
<proteinExistence type="inferred from homology"/>
<keyword id="KW-0058">Aromatic hydrocarbons catabolism</keyword>
<keyword id="KW-0456">Lyase</keyword>
<keyword id="KW-0464">Manganese</keyword>
<keyword id="KW-0479">Metal-binding</keyword>
<keyword id="KW-1185">Reference proteome</keyword>
<gene>
    <name evidence="1" type="primary">hsaF</name>
    <name type="ordered locus">MT3638</name>
</gene>
<organism>
    <name type="scientific">Mycobacterium tuberculosis (strain CDC 1551 / Oshkosh)</name>
    <dbReference type="NCBI Taxonomy" id="83331"/>
    <lineage>
        <taxon>Bacteria</taxon>
        <taxon>Bacillati</taxon>
        <taxon>Actinomycetota</taxon>
        <taxon>Actinomycetes</taxon>
        <taxon>Mycobacteriales</taxon>
        <taxon>Mycobacteriaceae</taxon>
        <taxon>Mycobacterium</taxon>
        <taxon>Mycobacterium tuberculosis complex</taxon>
    </lineage>
</organism>